<gene>
    <name evidence="1" type="primary">secF</name>
    <name type="ordered locus">Sterm_2737</name>
</gene>
<reference key="1">
    <citation type="submission" date="2009-09" db="EMBL/GenBank/DDBJ databases">
        <title>The complete chromosome of Sebaldella termitidis ATCC 33386.</title>
        <authorList>
            <consortium name="US DOE Joint Genome Institute (JGI-PGF)"/>
            <person name="Lucas S."/>
            <person name="Copeland A."/>
            <person name="Lapidus A."/>
            <person name="Glavina del Rio T."/>
            <person name="Dalin E."/>
            <person name="Tice H."/>
            <person name="Bruce D."/>
            <person name="Goodwin L."/>
            <person name="Pitluck S."/>
            <person name="Kyrpides N."/>
            <person name="Mavromatis K."/>
            <person name="Ivanova N."/>
            <person name="Mikhailova N."/>
            <person name="Sims D."/>
            <person name="Meincke L."/>
            <person name="Brettin T."/>
            <person name="Detter J.C."/>
            <person name="Han C."/>
            <person name="Larimer F."/>
            <person name="Land M."/>
            <person name="Hauser L."/>
            <person name="Markowitz V."/>
            <person name="Cheng J.F."/>
            <person name="Hugenholtz P."/>
            <person name="Woyke T."/>
            <person name="Wu D."/>
            <person name="Eisen J.A."/>
        </authorList>
    </citation>
    <scope>NUCLEOTIDE SEQUENCE [LARGE SCALE GENOMIC DNA]</scope>
    <source>
        <strain>ATCC 33386 / NCTC 11300</strain>
    </source>
</reference>
<evidence type="ECO:0000255" key="1">
    <source>
        <dbReference type="HAMAP-Rule" id="MF_01464"/>
    </source>
</evidence>
<comment type="function">
    <text evidence="1">Part of the Sec protein translocase complex. Interacts with the SecYEG preprotein conducting channel. SecDF uses the proton motive force (PMF) to complete protein translocation after the ATP-dependent function of SecA.</text>
</comment>
<comment type="subunit">
    <text evidence="1">Forms a complex with SecD. Part of the essential Sec protein translocation apparatus which comprises SecA, SecYEG and auxiliary proteins SecDF. Other proteins may also be involved.</text>
</comment>
<comment type="subcellular location">
    <subcellularLocation>
        <location evidence="1">Cell inner membrane</location>
        <topology evidence="1">Multi-pass membrane protein</topology>
    </subcellularLocation>
</comment>
<comment type="similarity">
    <text evidence="1">Belongs to the SecD/SecF family. SecF subfamily.</text>
</comment>
<keyword id="KW-0997">Cell inner membrane</keyword>
<keyword id="KW-1003">Cell membrane</keyword>
<keyword id="KW-0472">Membrane</keyword>
<keyword id="KW-0653">Protein transport</keyword>
<keyword id="KW-1185">Reference proteome</keyword>
<keyword id="KW-0811">Translocation</keyword>
<keyword id="KW-0812">Transmembrane</keyword>
<keyword id="KW-1133">Transmembrane helix</keyword>
<keyword id="KW-0813">Transport</keyword>
<feature type="chain" id="PRO_0000412702" description="Protein translocase subunit SecF">
    <location>
        <begin position="1"/>
        <end position="308"/>
    </location>
</feature>
<feature type="transmembrane region" description="Helical" evidence="1">
    <location>
        <begin position="12"/>
        <end position="32"/>
    </location>
</feature>
<feature type="transmembrane region" description="Helical" evidence="1">
    <location>
        <begin position="127"/>
        <end position="147"/>
    </location>
</feature>
<feature type="transmembrane region" description="Helical" evidence="1">
    <location>
        <begin position="152"/>
        <end position="172"/>
    </location>
</feature>
<feature type="transmembrane region" description="Helical" evidence="1">
    <location>
        <begin position="182"/>
        <end position="202"/>
    </location>
</feature>
<feature type="transmembrane region" description="Helical" evidence="1">
    <location>
        <begin position="234"/>
        <end position="254"/>
    </location>
</feature>
<feature type="transmembrane region" description="Helical" evidence="1">
    <location>
        <begin position="262"/>
        <end position="282"/>
    </location>
</feature>
<organism>
    <name type="scientific">Sebaldella termitidis (strain ATCC 33386 / NCTC 11300)</name>
    <dbReference type="NCBI Taxonomy" id="526218"/>
    <lineage>
        <taxon>Bacteria</taxon>
        <taxon>Fusobacteriati</taxon>
        <taxon>Fusobacteriota</taxon>
        <taxon>Fusobacteriia</taxon>
        <taxon>Fusobacteriales</taxon>
        <taxon>Leptotrichiaceae</taxon>
        <taxon>Sebaldella</taxon>
    </lineage>
</organism>
<protein>
    <recommendedName>
        <fullName>Protein translocase subunit SecF</fullName>
    </recommendedName>
</protein>
<proteinExistence type="inferred from homology"/>
<name>SECF_SEBTE</name>
<accession>D1AMK8</accession>
<dbReference type="EMBL" id="CP001739">
    <property type="protein sequence ID" value="ACZ09582.1"/>
    <property type="molecule type" value="Genomic_DNA"/>
</dbReference>
<dbReference type="RefSeq" id="WP_012862176.1">
    <property type="nucleotide sequence ID" value="NC_013517.1"/>
</dbReference>
<dbReference type="SMR" id="D1AMK8"/>
<dbReference type="STRING" id="526218.Sterm_2737"/>
<dbReference type="KEGG" id="str:Sterm_2737"/>
<dbReference type="eggNOG" id="COG0341">
    <property type="taxonomic scope" value="Bacteria"/>
</dbReference>
<dbReference type="HOGENOM" id="CLU_050012_0_0_0"/>
<dbReference type="Proteomes" id="UP000000845">
    <property type="component" value="Chromosome"/>
</dbReference>
<dbReference type="GO" id="GO:0005886">
    <property type="term" value="C:plasma membrane"/>
    <property type="evidence" value="ECO:0007669"/>
    <property type="project" value="UniProtKB-SubCell"/>
</dbReference>
<dbReference type="GO" id="GO:0015450">
    <property type="term" value="F:protein-transporting ATPase activity"/>
    <property type="evidence" value="ECO:0007669"/>
    <property type="project" value="InterPro"/>
</dbReference>
<dbReference type="GO" id="GO:0065002">
    <property type="term" value="P:intracellular protein transmembrane transport"/>
    <property type="evidence" value="ECO:0007669"/>
    <property type="project" value="UniProtKB-UniRule"/>
</dbReference>
<dbReference type="GO" id="GO:0006605">
    <property type="term" value="P:protein targeting"/>
    <property type="evidence" value="ECO:0007669"/>
    <property type="project" value="UniProtKB-UniRule"/>
</dbReference>
<dbReference type="GO" id="GO:0043952">
    <property type="term" value="P:protein transport by the Sec complex"/>
    <property type="evidence" value="ECO:0007669"/>
    <property type="project" value="UniProtKB-UniRule"/>
</dbReference>
<dbReference type="FunFam" id="1.20.1640.10:FF:000024">
    <property type="entry name" value="Multifunctional fusion protein"/>
    <property type="match status" value="1"/>
</dbReference>
<dbReference type="Gene3D" id="1.20.1640.10">
    <property type="entry name" value="Multidrug efflux transporter AcrB transmembrane domain"/>
    <property type="match status" value="1"/>
</dbReference>
<dbReference type="HAMAP" id="MF_01464_B">
    <property type="entry name" value="SecF_B"/>
    <property type="match status" value="1"/>
</dbReference>
<dbReference type="InterPro" id="IPR022813">
    <property type="entry name" value="SecD/SecF_arch_bac"/>
</dbReference>
<dbReference type="InterPro" id="IPR022645">
    <property type="entry name" value="SecD/SecF_bac"/>
</dbReference>
<dbReference type="InterPro" id="IPR022646">
    <property type="entry name" value="SecD/SecF_CS"/>
</dbReference>
<dbReference type="InterPro" id="IPR048634">
    <property type="entry name" value="SecD_SecF_C"/>
</dbReference>
<dbReference type="InterPro" id="IPR055344">
    <property type="entry name" value="SecD_SecF_C_bact"/>
</dbReference>
<dbReference type="InterPro" id="IPR005665">
    <property type="entry name" value="SecF_bac"/>
</dbReference>
<dbReference type="NCBIfam" id="TIGR00916">
    <property type="entry name" value="2A0604s01"/>
    <property type="match status" value="1"/>
</dbReference>
<dbReference type="NCBIfam" id="TIGR00966">
    <property type="entry name" value="transloc_SecF"/>
    <property type="match status" value="1"/>
</dbReference>
<dbReference type="PANTHER" id="PTHR30081:SF8">
    <property type="entry name" value="PROTEIN TRANSLOCASE SUBUNIT SECF"/>
    <property type="match status" value="1"/>
</dbReference>
<dbReference type="PANTHER" id="PTHR30081">
    <property type="entry name" value="PROTEIN-EXPORT MEMBRANE PROTEIN SEC"/>
    <property type="match status" value="1"/>
</dbReference>
<dbReference type="Pfam" id="PF07549">
    <property type="entry name" value="Sec_GG"/>
    <property type="match status" value="1"/>
</dbReference>
<dbReference type="Pfam" id="PF02355">
    <property type="entry name" value="SecD_SecF_C"/>
    <property type="match status" value="1"/>
</dbReference>
<dbReference type="PRINTS" id="PR01755">
    <property type="entry name" value="SECFTRNLCASE"/>
</dbReference>
<dbReference type="SUPFAM" id="SSF82866">
    <property type="entry name" value="Multidrug efflux transporter AcrB transmembrane domain"/>
    <property type="match status" value="1"/>
</dbReference>
<sequence length="308" mass="34764">MDLKLMKTRNVYFIFSTFMILFSLFSIFTKGFNLGIDFTGGNIYQMKFEKPVSKEAMDKTLKEMASKYPSLKSNKVQYSEGNTVLLRTQIADEKEKSAILEELKAEQGNYELIKADAVGAVVGNELAKNALWALALGSILILIYITIRFEWIYALSSVLALLHDVLVTIGFISFFQFEVDTPFIAAILTILGYSMNDTIVIFDRIRENDHKYGGKKPFADVIDESVNKVFIRSVYTSLTTLLALAALLIFGGSTLRTFNITLLVGIVYGTYSSIWLASPLVYLLRRFKKPPKQEKNGKKDRSMEKVVV</sequence>